<protein>
    <recommendedName>
        <fullName evidence="1">Phosphoribosylaminoimidazole-succinocarboxamide synthase</fullName>
        <ecNumber evidence="1">6.3.2.6</ecNumber>
    </recommendedName>
    <alternativeName>
        <fullName evidence="1">SAICAR synthetase</fullName>
    </alternativeName>
</protein>
<keyword id="KW-0067">ATP-binding</keyword>
<keyword id="KW-0436">Ligase</keyword>
<keyword id="KW-0547">Nucleotide-binding</keyword>
<keyword id="KW-0658">Purine biosynthesis</keyword>
<sequence length="367" mass="41500">MSLSEQVLAVNDDLPIRTDKPVHSGKVRSVYWLTEEDSRRLIKEKGYNVAPDAPLAIMVISDRISAFDCIWHGEGGLKGIPGKGAALNAISNHWFQLFKDNNLADSHILDIPHPFVWIVQKAKPVMIEAICRQYITGSMWRAYTNGEREFCGIQIPERLEKDEELADLLLTPSTKGVLKGIEGVSEVDDVNITRKDIENNFSAFNFSSIEDIALYEKLLKEGFAVISKALNDIDQIFVDTKFEFGYVNDAQGNEKLIYMDEVGTPDSSRIWDKNAYRSGHIIENSKEGFRQFLLNHFPEPDILLNKNRMDERFALATENSLPLEAMMDLSKTYLDIAAKITGAPIMLSDNPKAEIIKVLKEQYQLVD</sequence>
<gene>
    <name evidence="1" type="primary">purC</name>
    <name type="ordered locus">VSAL_I1698</name>
</gene>
<reference key="1">
    <citation type="journal article" date="2008" name="BMC Genomics">
        <title>The genome sequence of the fish pathogen Aliivibrio salmonicida strain LFI1238 shows extensive evidence of gene decay.</title>
        <authorList>
            <person name="Hjerde E."/>
            <person name="Lorentzen M.S."/>
            <person name="Holden M.T."/>
            <person name="Seeger K."/>
            <person name="Paulsen S."/>
            <person name="Bason N."/>
            <person name="Churcher C."/>
            <person name="Harris D."/>
            <person name="Norbertczak H."/>
            <person name="Quail M.A."/>
            <person name="Sanders S."/>
            <person name="Thurston S."/>
            <person name="Parkhill J."/>
            <person name="Willassen N.P."/>
            <person name="Thomson N.R."/>
        </authorList>
    </citation>
    <scope>NUCLEOTIDE SEQUENCE [LARGE SCALE GENOMIC DNA]</scope>
    <source>
        <strain>LFI1238</strain>
    </source>
</reference>
<feature type="chain" id="PRO_1000117822" description="Phosphoribosylaminoimidazole-succinocarboxamide synthase">
    <location>
        <begin position="1"/>
        <end position="367"/>
    </location>
</feature>
<name>PUR7_ALISL</name>
<proteinExistence type="inferred from homology"/>
<organism>
    <name type="scientific">Aliivibrio salmonicida (strain LFI1238)</name>
    <name type="common">Vibrio salmonicida (strain LFI1238)</name>
    <dbReference type="NCBI Taxonomy" id="316275"/>
    <lineage>
        <taxon>Bacteria</taxon>
        <taxon>Pseudomonadati</taxon>
        <taxon>Pseudomonadota</taxon>
        <taxon>Gammaproteobacteria</taxon>
        <taxon>Vibrionales</taxon>
        <taxon>Vibrionaceae</taxon>
        <taxon>Aliivibrio</taxon>
    </lineage>
</organism>
<evidence type="ECO:0000255" key="1">
    <source>
        <dbReference type="HAMAP-Rule" id="MF_00137"/>
    </source>
</evidence>
<comment type="catalytic activity">
    <reaction evidence="1">
        <text>5-amino-1-(5-phospho-D-ribosyl)imidazole-4-carboxylate + L-aspartate + ATP = (2S)-2-[5-amino-1-(5-phospho-beta-D-ribosyl)imidazole-4-carboxamido]succinate + ADP + phosphate + 2 H(+)</text>
        <dbReference type="Rhea" id="RHEA:22628"/>
        <dbReference type="ChEBI" id="CHEBI:15378"/>
        <dbReference type="ChEBI" id="CHEBI:29991"/>
        <dbReference type="ChEBI" id="CHEBI:30616"/>
        <dbReference type="ChEBI" id="CHEBI:43474"/>
        <dbReference type="ChEBI" id="CHEBI:58443"/>
        <dbReference type="ChEBI" id="CHEBI:77657"/>
        <dbReference type="ChEBI" id="CHEBI:456216"/>
        <dbReference type="EC" id="6.3.2.6"/>
    </reaction>
</comment>
<comment type="pathway">
    <text evidence="1">Purine metabolism; IMP biosynthesis via de novo pathway; 5-amino-1-(5-phospho-D-ribosyl)imidazole-4-carboxamide from 5-amino-1-(5-phospho-D-ribosyl)imidazole-4-carboxylate: step 1/2.</text>
</comment>
<comment type="similarity">
    <text evidence="1">Belongs to the SAICAR synthetase family.</text>
</comment>
<dbReference type="EC" id="6.3.2.6" evidence="1"/>
<dbReference type="EMBL" id="FM178379">
    <property type="protein sequence ID" value="CAQ79383.1"/>
    <property type="molecule type" value="Genomic_DNA"/>
</dbReference>
<dbReference type="RefSeq" id="WP_012550315.1">
    <property type="nucleotide sequence ID" value="NC_011312.1"/>
</dbReference>
<dbReference type="SMR" id="B6EMJ7"/>
<dbReference type="KEGG" id="vsa:VSAL_I1698"/>
<dbReference type="eggNOG" id="COG0152">
    <property type="taxonomic scope" value="Bacteria"/>
</dbReference>
<dbReference type="HOGENOM" id="CLU_064197_0_0_6"/>
<dbReference type="UniPathway" id="UPA00074">
    <property type="reaction ID" value="UER00131"/>
</dbReference>
<dbReference type="Proteomes" id="UP000001730">
    <property type="component" value="Chromosome 1"/>
</dbReference>
<dbReference type="GO" id="GO:0005737">
    <property type="term" value="C:cytoplasm"/>
    <property type="evidence" value="ECO:0007669"/>
    <property type="project" value="TreeGrafter"/>
</dbReference>
<dbReference type="GO" id="GO:0005524">
    <property type="term" value="F:ATP binding"/>
    <property type="evidence" value="ECO:0007669"/>
    <property type="project" value="UniProtKB-KW"/>
</dbReference>
<dbReference type="GO" id="GO:0004639">
    <property type="term" value="F:phosphoribosylaminoimidazolesuccinocarboxamide synthase activity"/>
    <property type="evidence" value="ECO:0007669"/>
    <property type="project" value="UniProtKB-UniRule"/>
</dbReference>
<dbReference type="GO" id="GO:0006189">
    <property type="term" value="P:'de novo' IMP biosynthetic process"/>
    <property type="evidence" value="ECO:0007669"/>
    <property type="project" value="UniProtKB-UniRule"/>
</dbReference>
<dbReference type="CDD" id="cd01414">
    <property type="entry name" value="SAICAR_synt_Sc"/>
    <property type="match status" value="1"/>
</dbReference>
<dbReference type="Gene3D" id="3.30.470.20">
    <property type="entry name" value="ATP-grasp fold, B domain"/>
    <property type="match status" value="1"/>
</dbReference>
<dbReference type="Gene3D" id="3.30.200.20">
    <property type="entry name" value="Phosphorylase Kinase, domain 1"/>
    <property type="match status" value="1"/>
</dbReference>
<dbReference type="HAMAP" id="MF_00137">
    <property type="entry name" value="SAICAR_synth"/>
    <property type="match status" value="1"/>
</dbReference>
<dbReference type="InterPro" id="IPR028923">
    <property type="entry name" value="SAICAR_synt/ADE2_N"/>
</dbReference>
<dbReference type="InterPro" id="IPR014106">
    <property type="entry name" value="SAICAR_synthase_Vibrio-typ"/>
</dbReference>
<dbReference type="NCBIfam" id="NF010567">
    <property type="entry name" value="PRK13960.1"/>
    <property type="match status" value="1"/>
</dbReference>
<dbReference type="NCBIfam" id="TIGR02735">
    <property type="entry name" value="purC_vibrio"/>
    <property type="match status" value="1"/>
</dbReference>
<dbReference type="PANTHER" id="PTHR43700">
    <property type="entry name" value="PHOSPHORIBOSYLAMINOIMIDAZOLE-SUCCINOCARBOXAMIDE SYNTHASE"/>
    <property type="match status" value="1"/>
</dbReference>
<dbReference type="PANTHER" id="PTHR43700:SF1">
    <property type="entry name" value="PHOSPHORIBOSYLAMINOIMIDAZOLE-SUCCINOCARBOXAMIDE SYNTHASE"/>
    <property type="match status" value="1"/>
</dbReference>
<dbReference type="Pfam" id="PF01259">
    <property type="entry name" value="SAICAR_synt"/>
    <property type="match status" value="1"/>
</dbReference>
<dbReference type="SUPFAM" id="SSF56104">
    <property type="entry name" value="SAICAR synthase-like"/>
    <property type="match status" value="1"/>
</dbReference>
<accession>B6EMJ7</accession>